<accession>Q7VZ31</accession>
<organism>
    <name type="scientific">Bordetella pertussis (strain Tohama I / ATCC BAA-589 / NCTC 13251)</name>
    <dbReference type="NCBI Taxonomy" id="257313"/>
    <lineage>
        <taxon>Bacteria</taxon>
        <taxon>Pseudomonadati</taxon>
        <taxon>Pseudomonadota</taxon>
        <taxon>Betaproteobacteria</taxon>
        <taxon>Burkholderiales</taxon>
        <taxon>Alcaligenaceae</taxon>
        <taxon>Bordetella</taxon>
    </lineage>
</organism>
<dbReference type="EC" id="7.6.2.-" evidence="1"/>
<dbReference type="EMBL" id="BX640414">
    <property type="protein sequence ID" value="CAE41406.1"/>
    <property type="molecule type" value="Genomic_DNA"/>
</dbReference>
<dbReference type="RefSeq" id="NP_879889.1">
    <property type="nucleotide sequence ID" value="NC_002929.2"/>
</dbReference>
<dbReference type="RefSeq" id="WP_003812422.1">
    <property type="nucleotide sequence ID" value="NZ_CP039022.1"/>
</dbReference>
<dbReference type="SMR" id="Q7VZ31"/>
<dbReference type="STRING" id="257313.BP1108"/>
<dbReference type="PaxDb" id="257313-BP1108"/>
<dbReference type="GeneID" id="93203825"/>
<dbReference type="KEGG" id="bpe:BP1108"/>
<dbReference type="PATRIC" id="fig|257313.5.peg.1186"/>
<dbReference type="eggNOG" id="COG1136">
    <property type="taxonomic scope" value="Bacteria"/>
</dbReference>
<dbReference type="HOGENOM" id="CLU_000604_1_22_4"/>
<dbReference type="Proteomes" id="UP000002676">
    <property type="component" value="Chromosome"/>
</dbReference>
<dbReference type="GO" id="GO:0005886">
    <property type="term" value="C:plasma membrane"/>
    <property type="evidence" value="ECO:0007669"/>
    <property type="project" value="UniProtKB-SubCell"/>
</dbReference>
<dbReference type="GO" id="GO:0005524">
    <property type="term" value="F:ATP binding"/>
    <property type="evidence" value="ECO:0007669"/>
    <property type="project" value="UniProtKB-KW"/>
</dbReference>
<dbReference type="GO" id="GO:0016887">
    <property type="term" value="F:ATP hydrolysis activity"/>
    <property type="evidence" value="ECO:0007669"/>
    <property type="project" value="InterPro"/>
</dbReference>
<dbReference type="GO" id="GO:0022857">
    <property type="term" value="F:transmembrane transporter activity"/>
    <property type="evidence" value="ECO:0007669"/>
    <property type="project" value="TreeGrafter"/>
</dbReference>
<dbReference type="GO" id="GO:0044874">
    <property type="term" value="P:lipoprotein localization to outer membrane"/>
    <property type="evidence" value="ECO:0007669"/>
    <property type="project" value="TreeGrafter"/>
</dbReference>
<dbReference type="GO" id="GO:0089705">
    <property type="term" value="P:protein localization to outer membrane"/>
    <property type="evidence" value="ECO:0007669"/>
    <property type="project" value="TreeGrafter"/>
</dbReference>
<dbReference type="CDD" id="cd03255">
    <property type="entry name" value="ABC_MJ0796_LolCDE_FtsE"/>
    <property type="match status" value="1"/>
</dbReference>
<dbReference type="FunFam" id="3.40.50.300:FF:000230">
    <property type="entry name" value="Lipoprotein-releasing system ATP-binding protein LolD"/>
    <property type="match status" value="1"/>
</dbReference>
<dbReference type="Gene3D" id="3.40.50.300">
    <property type="entry name" value="P-loop containing nucleotide triphosphate hydrolases"/>
    <property type="match status" value="1"/>
</dbReference>
<dbReference type="InterPro" id="IPR003593">
    <property type="entry name" value="AAA+_ATPase"/>
</dbReference>
<dbReference type="InterPro" id="IPR003439">
    <property type="entry name" value="ABC_transporter-like_ATP-bd"/>
</dbReference>
<dbReference type="InterPro" id="IPR017871">
    <property type="entry name" value="ABC_transporter-like_CS"/>
</dbReference>
<dbReference type="InterPro" id="IPR015854">
    <property type="entry name" value="ABC_transpr_LolD-like"/>
</dbReference>
<dbReference type="InterPro" id="IPR011924">
    <property type="entry name" value="LolD_lipo_ATP-bd"/>
</dbReference>
<dbReference type="InterPro" id="IPR017911">
    <property type="entry name" value="MacB-like_ATP-bd"/>
</dbReference>
<dbReference type="InterPro" id="IPR027417">
    <property type="entry name" value="P-loop_NTPase"/>
</dbReference>
<dbReference type="NCBIfam" id="TIGR02211">
    <property type="entry name" value="LolD_lipo_ex"/>
    <property type="match status" value="1"/>
</dbReference>
<dbReference type="PANTHER" id="PTHR24220">
    <property type="entry name" value="IMPORT ATP-BINDING PROTEIN"/>
    <property type="match status" value="1"/>
</dbReference>
<dbReference type="PANTHER" id="PTHR24220:SF689">
    <property type="entry name" value="LIPOPROTEIN-RELEASING SYSTEM ATP-BINDING PROTEIN LOLD"/>
    <property type="match status" value="1"/>
</dbReference>
<dbReference type="Pfam" id="PF00005">
    <property type="entry name" value="ABC_tran"/>
    <property type="match status" value="1"/>
</dbReference>
<dbReference type="SMART" id="SM00382">
    <property type="entry name" value="AAA"/>
    <property type="match status" value="1"/>
</dbReference>
<dbReference type="SUPFAM" id="SSF52540">
    <property type="entry name" value="P-loop containing nucleoside triphosphate hydrolases"/>
    <property type="match status" value="1"/>
</dbReference>
<dbReference type="PROSITE" id="PS00211">
    <property type="entry name" value="ABC_TRANSPORTER_1"/>
    <property type="match status" value="1"/>
</dbReference>
<dbReference type="PROSITE" id="PS50893">
    <property type="entry name" value="ABC_TRANSPORTER_2"/>
    <property type="match status" value="1"/>
</dbReference>
<dbReference type="PROSITE" id="PS51244">
    <property type="entry name" value="LOLD"/>
    <property type="match status" value="1"/>
</dbReference>
<sequence>MTEPNDTGPALQAEHLGKVYDEGPARIEVLSDVSLSVARGEMVAIVGASGSGKSTLLHILGLLDVPSSGTVSVDGVPAAGLSEKRKSALRNRSLGFVYQFHHLLPEFSALDNVAMPLIVRRENRDRARAQAREVLELVGLAAREEHFPGQLSGGERQRVALARALVTRPACVLADEPTGNLDRHTAHNMFELLTRVNRESGTAFVIVTHDPELAARADRQLHMENGRLQPD</sequence>
<reference key="1">
    <citation type="journal article" date="2003" name="Nat. Genet.">
        <title>Comparative analysis of the genome sequences of Bordetella pertussis, Bordetella parapertussis and Bordetella bronchiseptica.</title>
        <authorList>
            <person name="Parkhill J."/>
            <person name="Sebaihia M."/>
            <person name="Preston A."/>
            <person name="Murphy L.D."/>
            <person name="Thomson N.R."/>
            <person name="Harris D.E."/>
            <person name="Holden M.T.G."/>
            <person name="Churcher C.M."/>
            <person name="Bentley S.D."/>
            <person name="Mungall K.L."/>
            <person name="Cerdeno-Tarraga A.-M."/>
            <person name="Temple L."/>
            <person name="James K.D."/>
            <person name="Harris B."/>
            <person name="Quail M.A."/>
            <person name="Achtman M."/>
            <person name="Atkin R."/>
            <person name="Baker S."/>
            <person name="Basham D."/>
            <person name="Bason N."/>
            <person name="Cherevach I."/>
            <person name="Chillingworth T."/>
            <person name="Collins M."/>
            <person name="Cronin A."/>
            <person name="Davis P."/>
            <person name="Doggett J."/>
            <person name="Feltwell T."/>
            <person name="Goble A."/>
            <person name="Hamlin N."/>
            <person name="Hauser H."/>
            <person name="Holroyd S."/>
            <person name="Jagels K."/>
            <person name="Leather S."/>
            <person name="Moule S."/>
            <person name="Norberczak H."/>
            <person name="O'Neil S."/>
            <person name="Ormond D."/>
            <person name="Price C."/>
            <person name="Rabbinowitsch E."/>
            <person name="Rutter S."/>
            <person name="Sanders M."/>
            <person name="Saunders D."/>
            <person name="Seeger K."/>
            <person name="Sharp S."/>
            <person name="Simmonds M."/>
            <person name="Skelton J."/>
            <person name="Squares R."/>
            <person name="Squares S."/>
            <person name="Stevens K."/>
            <person name="Unwin L."/>
            <person name="Whitehead S."/>
            <person name="Barrell B.G."/>
            <person name="Maskell D.J."/>
        </authorList>
    </citation>
    <scope>NUCLEOTIDE SEQUENCE [LARGE SCALE GENOMIC DNA]</scope>
    <source>
        <strain>Tohama I / ATCC BAA-589 / NCTC 13251</strain>
    </source>
</reference>
<gene>
    <name evidence="1" type="primary">lolD</name>
    <name type="ordered locus">BP1108</name>
</gene>
<feature type="chain" id="PRO_0000092421" description="Lipoprotein-releasing system ATP-binding protein LolD">
    <location>
        <begin position="1"/>
        <end position="231"/>
    </location>
</feature>
<feature type="domain" description="ABC transporter" evidence="1">
    <location>
        <begin position="11"/>
        <end position="231"/>
    </location>
</feature>
<feature type="binding site" evidence="1">
    <location>
        <begin position="47"/>
        <end position="54"/>
    </location>
    <ligand>
        <name>ATP</name>
        <dbReference type="ChEBI" id="CHEBI:30616"/>
    </ligand>
</feature>
<evidence type="ECO:0000255" key="1">
    <source>
        <dbReference type="HAMAP-Rule" id="MF_01708"/>
    </source>
</evidence>
<comment type="function">
    <text evidence="1">Part of the ABC transporter complex LolCDE involved in the translocation of mature outer membrane-directed lipoproteins, from the inner membrane to the periplasmic chaperone, LolA. Responsible for the formation of the LolA-lipoprotein complex in an ATP-dependent manner.</text>
</comment>
<comment type="subunit">
    <text evidence="1">The complex is composed of two ATP-binding proteins (LolD) and two transmembrane proteins (LolC and LolE).</text>
</comment>
<comment type="subcellular location">
    <subcellularLocation>
        <location evidence="1">Cell inner membrane</location>
        <topology evidence="1">Peripheral membrane protein</topology>
    </subcellularLocation>
</comment>
<comment type="similarity">
    <text evidence="1">Belongs to the ABC transporter superfamily. Lipoprotein translocase (TC 3.A.1.125) family.</text>
</comment>
<proteinExistence type="inferred from homology"/>
<keyword id="KW-0067">ATP-binding</keyword>
<keyword id="KW-0997">Cell inner membrane</keyword>
<keyword id="KW-1003">Cell membrane</keyword>
<keyword id="KW-0472">Membrane</keyword>
<keyword id="KW-0547">Nucleotide-binding</keyword>
<keyword id="KW-1185">Reference proteome</keyword>
<keyword id="KW-1278">Translocase</keyword>
<keyword id="KW-0813">Transport</keyword>
<protein>
    <recommendedName>
        <fullName evidence="1">Lipoprotein-releasing system ATP-binding protein LolD</fullName>
        <ecNumber evidence="1">7.6.2.-</ecNumber>
    </recommendedName>
</protein>
<name>LOLD_BORPE</name>